<dbReference type="EC" id="3.5.1.-"/>
<dbReference type="EMBL" id="X97918">
    <property type="protein sequence ID" value="CAA66518.1"/>
    <property type="molecule type" value="Genomic_DNA"/>
</dbReference>
<dbReference type="PIR" id="T42311">
    <property type="entry name" value="T42311"/>
</dbReference>
<dbReference type="RefSeq" id="NP_690702.1">
    <property type="nucleotide sequence ID" value="NC_004166.2"/>
</dbReference>
<dbReference type="SMR" id="O48471"/>
<dbReference type="KEGG" id="vg:955352"/>
<dbReference type="OrthoDB" id="5847at10239"/>
<dbReference type="Proteomes" id="UP000002559">
    <property type="component" value="Genome"/>
</dbReference>
<dbReference type="GO" id="GO:0030430">
    <property type="term" value="C:host cell cytoplasm"/>
    <property type="evidence" value="ECO:0007669"/>
    <property type="project" value="UniProtKB-SubCell"/>
</dbReference>
<dbReference type="GO" id="GO:0046729">
    <property type="term" value="C:viral procapsid"/>
    <property type="evidence" value="ECO:0000314"/>
    <property type="project" value="CACAO"/>
</dbReference>
<dbReference type="GO" id="GO:0008745">
    <property type="term" value="F:N-acetylmuramoyl-L-alanine amidase activity"/>
    <property type="evidence" value="ECO:0007669"/>
    <property type="project" value="InterPro"/>
</dbReference>
<dbReference type="GO" id="GO:0042742">
    <property type="term" value="P:defense response to bacterium"/>
    <property type="evidence" value="ECO:0007669"/>
    <property type="project" value="UniProtKB-KW"/>
</dbReference>
<dbReference type="GO" id="GO:0031640">
    <property type="term" value="P:killing of cells of another organism"/>
    <property type="evidence" value="ECO:0007669"/>
    <property type="project" value="UniProtKB-KW"/>
</dbReference>
<dbReference type="GO" id="GO:0009253">
    <property type="term" value="P:peptidoglycan catabolic process"/>
    <property type="evidence" value="ECO:0007669"/>
    <property type="project" value="InterPro"/>
</dbReference>
<dbReference type="CDD" id="cd02696">
    <property type="entry name" value="MurNAc-LAA"/>
    <property type="match status" value="1"/>
</dbReference>
<dbReference type="Gene3D" id="3.40.630.40">
    <property type="entry name" value="Zn-dependent exopeptidases"/>
    <property type="match status" value="1"/>
</dbReference>
<dbReference type="InterPro" id="IPR044081">
    <property type="entry name" value="DUF5776"/>
</dbReference>
<dbReference type="InterPro" id="IPR002508">
    <property type="entry name" value="MurNAc-LAA_cat"/>
</dbReference>
<dbReference type="InterPro" id="IPR050695">
    <property type="entry name" value="N-acetylmuramoyl_amidase_3"/>
</dbReference>
<dbReference type="PANTHER" id="PTHR30404">
    <property type="entry name" value="N-ACETYLMURAMOYL-L-ALANINE AMIDASE"/>
    <property type="match status" value="1"/>
</dbReference>
<dbReference type="PANTHER" id="PTHR30404:SF0">
    <property type="entry name" value="N-ACETYLMURAMOYL-L-ALANINE AMIDASE AMIC"/>
    <property type="match status" value="1"/>
</dbReference>
<dbReference type="Pfam" id="PF01520">
    <property type="entry name" value="Amidase_3"/>
    <property type="match status" value="1"/>
</dbReference>
<dbReference type="Pfam" id="PF19087">
    <property type="entry name" value="DUF5776"/>
    <property type="match status" value="1"/>
</dbReference>
<dbReference type="SMART" id="SM00646">
    <property type="entry name" value="Ami_3"/>
    <property type="match status" value="1"/>
</dbReference>
<dbReference type="SUPFAM" id="SSF53187">
    <property type="entry name" value="Zn-dependent exopeptidases"/>
    <property type="match status" value="1"/>
</dbReference>
<accession>O48471</accession>
<feature type="chain" id="PRO_0000439629" description="Endolysin">
    <location>
        <begin position="1"/>
        <end position="271"/>
    </location>
</feature>
<feature type="domain" description="MurNAc-LAA" evidence="1">
    <location>
        <begin position="5"/>
        <end position="178"/>
    </location>
</feature>
<sequence length="271" mass="29882">MSKLVWLDAGHGGKDSGAAANGIKEKDIVLKIVKKVKSILTSRYEVAVKLTRDSDVFYELIDRARKANAAKADLFVSVHINATPGGKGFETYRYVKTSASSSTGQQQKVLHDAIYKRIKKYGIKDRGEKAADLSVLRNTSMPAVLTENLFIDNKDEAALLKKDSFLNDVAEGHAEGIAEILNLKKKSGGSAPKKEDKPSSGKTKMVIVKDNPDGFLWVYNKADWNARYKKVKPDEAFTIDKTVTVNGSKMYKLKSGLYITAASKYVTVKEK</sequence>
<name>ENLYS_BPSPP</name>
<comment type="function">
    <text evidence="4">Endolysin that degrades host peptidoglycans and participates with the holin protein(s) in the sequential events which lead to the programmed host cell lysis releasing the mature viral particles. Once the holin(s) has permeabilized the host cell membrane, the endolysin can reach the periplasm and break down the peptidoglycan layer.</text>
</comment>
<comment type="subcellular location">
    <subcellularLocation>
        <location>Host cytoplasm</location>
    </subcellularLocation>
    <text evidence="3">The endolysin is cytoplasmic, but can reach the periplasmic space with the help of the holins which disrupt the host cell membrane.</text>
</comment>
<evidence type="ECO:0000255" key="1"/>
<evidence type="ECO:0000303" key="2">
    <source>
    </source>
</evidence>
<evidence type="ECO:0000305" key="3"/>
<evidence type="ECO:0000305" key="4">
    <source>
    </source>
</evidence>
<organism>
    <name type="scientific">Bacillus phage SPP1</name>
    <name type="common">Bacteriophage SPP1</name>
    <dbReference type="NCBI Taxonomy" id="10724"/>
    <lineage>
        <taxon>Viruses</taxon>
        <taxon>Duplodnaviria</taxon>
        <taxon>Heunggongvirae</taxon>
        <taxon>Uroviricota</taxon>
        <taxon>Caudoviricetes</taxon>
    </lineage>
</organism>
<protein>
    <recommendedName>
        <fullName evidence="2">Endolysin</fullName>
        <ecNumber>3.5.1.-</ecNumber>
    </recommendedName>
    <alternativeName>
        <fullName evidence="2">LysSPP1</fullName>
    </alternativeName>
    <alternativeName>
        <fullName evidence="3">Putative N-acetylmuramoyl-L-alanine amidase</fullName>
    </alternativeName>
</protein>
<proteinExistence type="predicted"/>
<organismHost>
    <name type="scientific">Bacillus subtilis</name>
    <dbReference type="NCBI Taxonomy" id="1423"/>
</organismHost>
<reference key="1">
    <citation type="journal article" date="1997" name="Gene">
        <title>The complete nucleotide sequence and functional organization of Bacillus subtilis bacteriophage SPP1.</title>
        <authorList>
            <person name="Alonso J.C."/>
            <person name="Luder G."/>
            <person name="Stiege A.C."/>
            <person name="Chai S."/>
            <person name="Weise F."/>
            <person name="Trautner T.A."/>
        </authorList>
    </citation>
    <scope>NUCLEOTIDE SEQUENCE [LARGE SCALE GENOMIC DNA]</scope>
</reference>
<reference key="2">
    <citation type="journal article" date="2016" name="Mol. Microbiol.">
        <title>More than a hole: the holin lethal function may be required to fully sensitize bacteria to the lytic action of canonical endolysins.</title>
        <authorList>
            <person name="Fernandes S."/>
            <person name="Sao-Jose C."/>
        </authorList>
    </citation>
    <scope>FUNCTION</scope>
</reference>
<keyword id="KW-0929">Antimicrobial</keyword>
<keyword id="KW-0081">Bacteriolytic enzyme</keyword>
<keyword id="KW-0204">Cytolysis</keyword>
<keyword id="KW-0578">Host cell lysis by virus</keyword>
<keyword id="KW-1035">Host cytoplasm</keyword>
<keyword id="KW-0378">Hydrolase</keyword>
<keyword id="KW-1185">Reference proteome</keyword>
<keyword id="KW-1188">Viral release from host cell</keyword>
<gene>
    <name type="primary">25</name>
</gene>